<reference key="1">
    <citation type="journal article" date="1994" name="Nature">
        <title>Host resistance to a fungal tomato pathogen lost by a single base-pair change in an avirulence gene.</title>
        <authorList>
            <person name="Joosten M.H.A.J."/>
            <person name="Cozijnsen T.J."/>
            <person name="de Wit P.J.G.M."/>
        </authorList>
    </citation>
    <scope>NUCLEOTIDE SEQUENCE [GENOMIC DNA / MRNA]</scope>
    <source>
        <strain>Race 5</strain>
    </source>
</reference>
<name>AVR4_PASFU</name>
<keyword id="KW-0002">3D-structure</keyword>
<keyword id="KW-0147">Chitin-binding</keyword>
<keyword id="KW-1015">Disulfide bond</keyword>
<keyword id="KW-0732">Signal</keyword>
<keyword id="KW-0843">Virulence</keyword>
<accession>Q00363</accession>
<comment type="function">
    <text>This necrosis-inducing peptide induces a hypersensitive response on Cf-4 tomato genotypes. Race-specific elicitors are compounds which only induce defense responses in genotypes of host plants which are resistant to the pathogenic race that produces the elicitor, but not in susceptible genotypes.</text>
</comment>
<protein>
    <recommendedName>
        <fullName>Race-specific elicitor A4</fullName>
    </recommendedName>
</protein>
<feature type="signal peptide" evidence="1">
    <location>
        <begin position="1"/>
        <end position="18"/>
    </location>
</feature>
<feature type="propeptide" id="PRO_0000020767" evidence="1">
    <location>
        <begin position="19"/>
        <end position="29"/>
    </location>
</feature>
<feature type="chain" id="PRO_0000020768" description="Race-specific elicitor A4">
    <location>
        <begin position="30"/>
        <end position="135"/>
    </location>
</feature>
<feature type="domain" description="Chitin-binding type-2" evidence="2">
    <location>
        <begin position="47"/>
        <end position="111"/>
    </location>
</feature>
<feature type="region of interest" description="Disordered" evidence="3">
    <location>
        <begin position="19"/>
        <end position="39"/>
    </location>
</feature>
<feature type="region of interest" description="Disordered" evidence="3">
    <location>
        <begin position="112"/>
        <end position="135"/>
    </location>
</feature>
<feature type="disulfide bond" evidence="2">
    <location>
        <begin position="86"/>
        <end position="101"/>
    </location>
</feature>
<feature type="helix" evidence="4">
    <location>
        <begin position="42"/>
        <end position="48"/>
    </location>
</feature>
<feature type="turn" evidence="4">
    <location>
        <begin position="53"/>
        <end position="56"/>
    </location>
</feature>
<feature type="strand" evidence="4">
    <location>
        <begin position="57"/>
        <end position="59"/>
    </location>
</feature>
<feature type="strand" evidence="4">
    <location>
        <begin position="64"/>
        <end position="72"/>
    </location>
</feature>
<feature type="strand" evidence="4">
    <location>
        <begin position="79"/>
        <end position="85"/>
    </location>
</feature>
<feature type="strand" evidence="4">
    <location>
        <begin position="91"/>
        <end position="93"/>
    </location>
</feature>
<feature type="turn" evidence="4">
    <location>
        <begin position="96"/>
        <end position="98"/>
    </location>
</feature>
<feature type="strand" evidence="4">
    <location>
        <begin position="100"/>
        <end position="102"/>
    </location>
</feature>
<feature type="helix" evidence="4">
    <location>
        <begin position="104"/>
        <end position="106"/>
    </location>
</feature>
<gene>
    <name type="primary">AVR4</name>
</gene>
<organism>
    <name type="scientific">Passalora fulva</name>
    <name type="common">Tomato leaf mold</name>
    <name type="synonym">Cladosporium fulvum</name>
    <dbReference type="NCBI Taxonomy" id="5499"/>
    <lineage>
        <taxon>Eukaryota</taxon>
        <taxon>Fungi</taxon>
        <taxon>Dikarya</taxon>
        <taxon>Ascomycota</taxon>
        <taxon>Pezizomycotina</taxon>
        <taxon>Dothideomycetes</taxon>
        <taxon>Dothideomycetidae</taxon>
        <taxon>Mycosphaerellales</taxon>
        <taxon>Mycosphaerellaceae</taxon>
        <taxon>Fulvia</taxon>
    </lineage>
</organism>
<evidence type="ECO:0000255" key="1"/>
<evidence type="ECO:0000255" key="2">
    <source>
        <dbReference type="PROSITE-ProRule" id="PRU00144"/>
    </source>
</evidence>
<evidence type="ECO:0000256" key="3">
    <source>
        <dbReference type="SAM" id="MobiDB-lite"/>
    </source>
</evidence>
<evidence type="ECO:0007829" key="4">
    <source>
        <dbReference type="PDB" id="6BN0"/>
    </source>
</evidence>
<proteinExistence type="evidence at protein level"/>
<dbReference type="EMBL" id="X78829">
    <property type="protein sequence ID" value="CAA55403.1"/>
    <property type="molecule type" value="mRNA"/>
</dbReference>
<dbReference type="EMBL" id="Y08356">
    <property type="protein sequence ID" value="CAA69643.1"/>
    <property type="molecule type" value="Genomic_DNA"/>
</dbReference>
<dbReference type="PIR" id="S41047">
    <property type="entry name" value="S41047"/>
</dbReference>
<dbReference type="PDB" id="6BN0">
    <property type="method" value="X-ray"/>
    <property type="resolution" value="1.95 A"/>
    <property type="chains" value="A/B/C/D=35-113"/>
</dbReference>
<dbReference type="PDBsum" id="6BN0"/>
<dbReference type="SMR" id="Q00363"/>
<dbReference type="CAZy" id="CBM14">
    <property type="family name" value="Carbohydrate-Binding Module Family 14"/>
</dbReference>
<dbReference type="KEGG" id="ag:CAA55403"/>
<dbReference type="OMA" id="DCLYPNP"/>
<dbReference type="OrthoDB" id="6020543at2759"/>
<dbReference type="PHI-base" id="PHI:18"/>
<dbReference type="PHI-base" id="PHI:5476"/>
<dbReference type="PHI-base" id="PHI:5487"/>
<dbReference type="PHI-base" id="PHI:5546"/>
<dbReference type="PHI-base" id="PHI:5556"/>
<dbReference type="PHI-base" id="PHI:5561"/>
<dbReference type="PHI-base" id="PHI:5567"/>
<dbReference type="PHI-base" id="PHI:5584"/>
<dbReference type="GO" id="GO:0005576">
    <property type="term" value="C:extracellular region"/>
    <property type="evidence" value="ECO:0007669"/>
    <property type="project" value="InterPro"/>
</dbReference>
<dbReference type="GO" id="GO:0008061">
    <property type="term" value="F:chitin binding"/>
    <property type="evidence" value="ECO:0000314"/>
    <property type="project" value="PHI-base"/>
</dbReference>
<dbReference type="GO" id="GO:0140320">
    <property type="term" value="F:PAMP receptor decoy activity"/>
    <property type="evidence" value="ECO:0000269"/>
    <property type="project" value="PHI-base"/>
</dbReference>
<dbReference type="GO" id="GO:0140403">
    <property type="term" value="P:effector-mediated suppression of host innate immune response"/>
    <property type="evidence" value="ECO:0000315"/>
    <property type="project" value="PHI-base"/>
</dbReference>
<dbReference type="Gene3D" id="2.170.140.10">
    <property type="entry name" value="Chitin binding domain"/>
    <property type="match status" value="1"/>
</dbReference>
<dbReference type="InterPro" id="IPR002557">
    <property type="entry name" value="Chitin-bd_dom"/>
</dbReference>
<dbReference type="InterPro" id="IPR036508">
    <property type="entry name" value="Chitin-bd_dom_sf"/>
</dbReference>
<dbReference type="Pfam" id="PF01607">
    <property type="entry name" value="CBM_14"/>
    <property type="match status" value="1"/>
</dbReference>
<dbReference type="SMART" id="SM00494">
    <property type="entry name" value="ChtBD2"/>
    <property type="match status" value="1"/>
</dbReference>
<dbReference type="SUPFAM" id="SSF57625">
    <property type="entry name" value="Invertebrate chitin-binding proteins"/>
    <property type="match status" value="1"/>
</dbReference>
<dbReference type="PROSITE" id="PS50940">
    <property type="entry name" value="CHIT_BIND_II"/>
    <property type="match status" value="1"/>
</dbReference>
<sequence length="135" mass="14559">MHYTTLLLSTLLVGTALAQPTNPPAKTPKKAPKTQPYNPCKPQEVIDTKCMGPKDCLYPNPDSCTTYIQCVPLDEVGNAKPVVKPCPKGLQWNDNVGKKWCDYPNLSTCPVKTPQPKPKKGGVGGKKASVGHPGY</sequence>